<keyword id="KW-0227">DNA damage</keyword>
<keyword id="KW-0233">DNA recombination</keyword>
<keyword id="KW-0234">DNA repair</keyword>
<keyword id="KW-1185">Reference proteome</keyword>
<dbReference type="EMBL" id="CP000509">
    <property type="protein sequence ID" value="ABL81440.1"/>
    <property type="molecule type" value="Genomic_DNA"/>
</dbReference>
<dbReference type="RefSeq" id="WP_011755387.1">
    <property type="nucleotide sequence ID" value="NC_008699.1"/>
</dbReference>
<dbReference type="SMR" id="A1SI05"/>
<dbReference type="STRING" id="196162.Noca_1930"/>
<dbReference type="KEGG" id="nca:Noca_1930"/>
<dbReference type="eggNOG" id="COG1381">
    <property type="taxonomic scope" value="Bacteria"/>
</dbReference>
<dbReference type="HOGENOM" id="CLU_066632_1_1_11"/>
<dbReference type="OrthoDB" id="9812244at2"/>
<dbReference type="Proteomes" id="UP000000640">
    <property type="component" value="Chromosome"/>
</dbReference>
<dbReference type="GO" id="GO:0043590">
    <property type="term" value="C:bacterial nucleoid"/>
    <property type="evidence" value="ECO:0007669"/>
    <property type="project" value="TreeGrafter"/>
</dbReference>
<dbReference type="GO" id="GO:0006310">
    <property type="term" value="P:DNA recombination"/>
    <property type="evidence" value="ECO:0007669"/>
    <property type="project" value="UniProtKB-UniRule"/>
</dbReference>
<dbReference type="GO" id="GO:0006302">
    <property type="term" value="P:double-strand break repair"/>
    <property type="evidence" value="ECO:0007669"/>
    <property type="project" value="TreeGrafter"/>
</dbReference>
<dbReference type="Gene3D" id="2.40.50.140">
    <property type="entry name" value="Nucleic acid-binding proteins"/>
    <property type="match status" value="1"/>
</dbReference>
<dbReference type="Gene3D" id="1.20.1440.120">
    <property type="entry name" value="Recombination protein O, C-terminal domain"/>
    <property type="match status" value="1"/>
</dbReference>
<dbReference type="HAMAP" id="MF_00201">
    <property type="entry name" value="RecO"/>
    <property type="match status" value="1"/>
</dbReference>
<dbReference type="InterPro" id="IPR037278">
    <property type="entry name" value="ARFGAP/RecO"/>
</dbReference>
<dbReference type="InterPro" id="IPR022572">
    <property type="entry name" value="DNA_rep/recomb_RecO_N"/>
</dbReference>
<dbReference type="InterPro" id="IPR012340">
    <property type="entry name" value="NA-bd_OB-fold"/>
</dbReference>
<dbReference type="InterPro" id="IPR003717">
    <property type="entry name" value="RecO"/>
</dbReference>
<dbReference type="InterPro" id="IPR042242">
    <property type="entry name" value="RecO_C"/>
</dbReference>
<dbReference type="NCBIfam" id="TIGR00613">
    <property type="entry name" value="reco"/>
    <property type="match status" value="1"/>
</dbReference>
<dbReference type="PANTHER" id="PTHR33991">
    <property type="entry name" value="DNA REPAIR PROTEIN RECO"/>
    <property type="match status" value="1"/>
</dbReference>
<dbReference type="PANTHER" id="PTHR33991:SF1">
    <property type="entry name" value="DNA REPAIR PROTEIN RECO"/>
    <property type="match status" value="1"/>
</dbReference>
<dbReference type="Pfam" id="PF02565">
    <property type="entry name" value="RecO_C"/>
    <property type="match status" value="1"/>
</dbReference>
<dbReference type="Pfam" id="PF11967">
    <property type="entry name" value="RecO_N"/>
    <property type="match status" value="1"/>
</dbReference>
<dbReference type="SUPFAM" id="SSF57863">
    <property type="entry name" value="ArfGap/RecO-like zinc finger"/>
    <property type="match status" value="1"/>
</dbReference>
<dbReference type="SUPFAM" id="SSF50249">
    <property type="entry name" value="Nucleic acid-binding proteins"/>
    <property type="match status" value="1"/>
</dbReference>
<protein>
    <recommendedName>
        <fullName evidence="1">DNA repair protein RecO</fullName>
    </recommendedName>
    <alternativeName>
        <fullName evidence="1">Recombination protein O</fullName>
    </alternativeName>
</protein>
<gene>
    <name evidence="1" type="primary">recO</name>
    <name type="ordered locus">Noca_1930</name>
</gene>
<evidence type="ECO:0000255" key="1">
    <source>
        <dbReference type="HAMAP-Rule" id="MF_00201"/>
    </source>
</evidence>
<comment type="function">
    <text evidence="1">Involved in DNA repair and RecF pathway recombination.</text>
</comment>
<comment type="similarity">
    <text evidence="1">Belongs to the RecO family.</text>
</comment>
<sequence length="244" mass="26524">MLYRDEAIVLRTHKLGEADRIVTLLTRQRGRVRAVAKGVRRTTSRFGSRLEPFTHVDLQLAEGRNLDTITQAETLTPFSKGLGLDYDRYTAGTVMLETADRLVAEEREPSVQQFLLLVGGLRAMVAGEHAPGQVLDSYLLRSLAVAGYAPSFEHCARCGTLSAEGAHRWFNPSMGGMLCSTCRVPGSASPAPETVALLGALLAGDWAVVDPAAARNLKEASTLVAAYLAWHLERGLKSMAYVER</sequence>
<accession>A1SI05</accession>
<name>RECO_NOCSJ</name>
<reference key="1">
    <citation type="submission" date="2006-12" db="EMBL/GenBank/DDBJ databases">
        <title>Complete sequence of chromosome 1 of Nocardioides sp. JS614.</title>
        <authorList>
            <person name="Copeland A."/>
            <person name="Lucas S."/>
            <person name="Lapidus A."/>
            <person name="Barry K."/>
            <person name="Detter J.C."/>
            <person name="Glavina del Rio T."/>
            <person name="Hammon N."/>
            <person name="Israni S."/>
            <person name="Dalin E."/>
            <person name="Tice H."/>
            <person name="Pitluck S."/>
            <person name="Thompson L.S."/>
            <person name="Brettin T."/>
            <person name="Bruce D."/>
            <person name="Han C."/>
            <person name="Tapia R."/>
            <person name="Schmutz J."/>
            <person name="Larimer F."/>
            <person name="Land M."/>
            <person name="Hauser L."/>
            <person name="Kyrpides N."/>
            <person name="Kim E."/>
            <person name="Mattes T."/>
            <person name="Gossett J."/>
            <person name="Richardson P."/>
        </authorList>
    </citation>
    <scope>NUCLEOTIDE SEQUENCE [LARGE SCALE GENOMIC DNA]</scope>
    <source>
        <strain>ATCC BAA-499 / JS614</strain>
    </source>
</reference>
<organism>
    <name type="scientific">Nocardioides sp. (strain ATCC BAA-499 / JS614)</name>
    <dbReference type="NCBI Taxonomy" id="196162"/>
    <lineage>
        <taxon>Bacteria</taxon>
        <taxon>Bacillati</taxon>
        <taxon>Actinomycetota</taxon>
        <taxon>Actinomycetes</taxon>
        <taxon>Propionibacteriales</taxon>
        <taxon>Nocardioidaceae</taxon>
        <taxon>Nocardioides</taxon>
    </lineage>
</organism>
<proteinExistence type="inferred from homology"/>
<feature type="chain" id="PRO_0000325205" description="DNA repair protein RecO">
    <location>
        <begin position="1"/>
        <end position="244"/>
    </location>
</feature>